<reference key="1">
    <citation type="journal article" date="2004" name="Genome Res.">
        <title>The status, quality, and expansion of the NIH full-length cDNA project: the Mammalian Gene Collection (MGC).</title>
        <authorList>
            <consortium name="The MGC Project Team"/>
        </authorList>
    </citation>
    <scope>NUCLEOTIDE SEQUENCE [LARGE SCALE MRNA]</scope>
    <source>
        <tissue>Ovary</tissue>
    </source>
</reference>
<protein>
    <recommendedName>
        <fullName>Normal mucosa of esophagus-specific gene 1 protein</fullName>
    </recommendedName>
</protein>
<comment type="subcellular location">
    <subcellularLocation>
        <location evidence="1">Nucleus</location>
    </subcellularLocation>
</comment>
<comment type="similarity">
    <text evidence="2">Belongs to the complex I NDUFA4 subunit family.</text>
</comment>
<gene>
    <name type="primary">Nmes1</name>
</gene>
<name>NMES1_RAT</name>
<feature type="chain" id="PRO_0000245771" description="Normal mucosa of esophagus-specific gene 1 protein">
    <location>
        <begin position="1"/>
        <end position="83"/>
    </location>
</feature>
<sequence>MGIFQRLMKNKELIPLAFFISAAATGASSFALYALKKTDVVIDRKRNPEPWETVDPTQPQKLLTINQEWKPVEELQRVRRATR</sequence>
<accession>Q5RK28</accession>
<organism>
    <name type="scientific">Rattus norvegicus</name>
    <name type="common">Rat</name>
    <dbReference type="NCBI Taxonomy" id="10116"/>
    <lineage>
        <taxon>Eukaryota</taxon>
        <taxon>Metazoa</taxon>
        <taxon>Chordata</taxon>
        <taxon>Craniata</taxon>
        <taxon>Vertebrata</taxon>
        <taxon>Euteleostomi</taxon>
        <taxon>Mammalia</taxon>
        <taxon>Eutheria</taxon>
        <taxon>Euarchontoglires</taxon>
        <taxon>Glires</taxon>
        <taxon>Rodentia</taxon>
        <taxon>Myomorpha</taxon>
        <taxon>Muroidea</taxon>
        <taxon>Muridae</taxon>
        <taxon>Murinae</taxon>
        <taxon>Rattus</taxon>
    </lineage>
</organism>
<dbReference type="EMBL" id="BC086337">
    <property type="protein sequence ID" value="AAH86337.1"/>
    <property type="molecule type" value="mRNA"/>
</dbReference>
<dbReference type="RefSeq" id="NP_001008518.1">
    <property type="nucleotide sequence ID" value="NM_001008518.2"/>
</dbReference>
<dbReference type="SMR" id="Q5RK28"/>
<dbReference type="FunCoup" id="Q5RK28">
    <property type="interactions" value="49"/>
</dbReference>
<dbReference type="STRING" id="10116.ENSRNOP00000065010"/>
<dbReference type="PhosphoSitePlus" id="Q5RK28"/>
<dbReference type="jPOST" id="Q5RK28"/>
<dbReference type="PaxDb" id="10116-ENSRNOP00000065010"/>
<dbReference type="GeneID" id="302884"/>
<dbReference type="KEGG" id="rno:302884"/>
<dbReference type="UCSC" id="RGD:1359583">
    <property type="organism name" value="rat"/>
</dbReference>
<dbReference type="AGR" id="RGD:1359583"/>
<dbReference type="CTD" id="302884"/>
<dbReference type="RGD" id="1359583">
    <property type="gene designation" value="C3h15orf48"/>
</dbReference>
<dbReference type="eggNOG" id="ENOG502STGR">
    <property type="taxonomic scope" value="Eukaryota"/>
</dbReference>
<dbReference type="InParanoid" id="Q5RK28"/>
<dbReference type="OrthoDB" id="5511684at2759"/>
<dbReference type="PhylomeDB" id="Q5RK28"/>
<dbReference type="PRO" id="PR:Q5RK28"/>
<dbReference type="Proteomes" id="UP000002494">
    <property type="component" value="Unplaced"/>
</dbReference>
<dbReference type="GO" id="GO:0005634">
    <property type="term" value="C:nucleus"/>
    <property type="evidence" value="ECO:0000266"/>
    <property type="project" value="RGD"/>
</dbReference>
<dbReference type="GO" id="GO:0045277">
    <property type="term" value="C:respiratory chain complex IV"/>
    <property type="evidence" value="ECO:0000318"/>
    <property type="project" value="GO_Central"/>
</dbReference>
<dbReference type="GO" id="GO:0009617">
    <property type="term" value="P:response to bacterium"/>
    <property type="evidence" value="ECO:0000266"/>
    <property type="project" value="RGD"/>
</dbReference>
<dbReference type="InterPro" id="IPR010530">
    <property type="entry name" value="B12D"/>
</dbReference>
<dbReference type="PANTHER" id="PTHR14256">
    <property type="entry name" value="NADH-UBIQUINONE OXIDOREDUCTASE MLRQ SUBUNIT"/>
    <property type="match status" value="1"/>
</dbReference>
<dbReference type="PANTHER" id="PTHR14256:SF3">
    <property type="entry name" value="NORMAL MUCOSA OF ESOPHAGUS-SPECIFIC GENE 1 PROTEIN"/>
    <property type="match status" value="1"/>
</dbReference>
<dbReference type="Pfam" id="PF06522">
    <property type="entry name" value="B12D"/>
    <property type="match status" value="1"/>
</dbReference>
<keyword id="KW-0539">Nucleus</keyword>
<keyword id="KW-1185">Reference proteome</keyword>
<evidence type="ECO:0000250" key="1"/>
<evidence type="ECO:0000305" key="2"/>
<proteinExistence type="inferred from homology"/>